<organism>
    <name type="scientific">Saccharopolyspora erythraea (strain ATCC 11635 / DSM 40517 / JCM 4748 / NBRC 13426 / NCIMB 8594 / NRRL 2338)</name>
    <dbReference type="NCBI Taxonomy" id="405948"/>
    <lineage>
        <taxon>Bacteria</taxon>
        <taxon>Bacillati</taxon>
        <taxon>Actinomycetota</taxon>
        <taxon>Actinomycetes</taxon>
        <taxon>Pseudonocardiales</taxon>
        <taxon>Pseudonocardiaceae</taxon>
        <taxon>Saccharopolyspora</taxon>
    </lineage>
</organism>
<comment type="function">
    <text evidence="1">Required for maturation of urease via the functional incorporation of the urease nickel metallocenter.</text>
</comment>
<comment type="subunit">
    <text evidence="1">UreD, UreF and UreG form a complex that acts as a GTP-hydrolysis-dependent molecular chaperone, activating the urease apoprotein by helping to assemble the nickel containing metallocenter of UreC. The UreE protein probably delivers the nickel.</text>
</comment>
<comment type="subcellular location">
    <subcellularLocation>
        <location evidence="1">Cytoplasm</location>
    </subcellularLocation>
</comment>
<comment type="similarity">
    <text evidence="1">Belongs to the UreD family.</text>
</comment>
<comment type="sequence caution" evidence="3">
    <conflict type="erroneous initiation">
        <sequence resource="EMBL-CDS" id="CAM01815"/>
    </conflict>
</comment>
<proteinExistence type="inferred from homology"/>
<sequence>MGRRAPDRLDRGVTTTSPRTQAPPQAGRGVHATARIRATSHDGVTVLPLLRSDGPFHLRQLRNHGSQARVCVVSAMSAPLGGDRLAIDVSVEAGAQLEITTAAATLALRGATTDHATYDVTLTVGEQATLYWLPQPLISTRGSNLRQTYTVDLAPTARLILREELILGRAHEPPGDLSSHLTVHRDGRPLLAQHTTFGSTAPGWDGPAVLGEHRATGQILIVDPAFANAPPATRLLGDEPANGEGIVAPLAGPAVLATALAPTATPLRHLLDDAVRPRTPCST</sequence>
<dbReference type="EMBL" id="AM420293">
    <property type="protein sequence ID" value="CAM01815.1"/>
    <property type="status" value="ALT_INIT"/>
    <property type="molecule type" value="Genomic_DNA"/>
</dbReference>
<dbReference type="SMR" id="A4FCP0"/>
<dbReference type="STRING" id="405948.SACE_2523"/>
<dbReference type="KEGG" id="sen:SACE_2523"/>
<dbReference type="eggNOG" id="COG0829">
    <property type="taxonomic scope" value="Bacteria"/>
</dbReference>
<dbReference type="HOGENOM" id="CLU_055097_4_0_11"/>
<dbReference type="Proteomes" id="UP000006728">
    <property type="component" value="Chromosome"/>
</dbReference>
<dbReference type="GO" id="GO:0005737">
    <property type="term" value="C:cytoplasm"/>
    <property type="evidence" value="ECO:0007669"/>
    <property type="project" value="UniProtKB-SubCell"/>
</dbReference>
<dbReference type="GO" id="GO:0016151">
    <property type="term" value="F:nickel cation binding"/>
    <property type="evidence" value="ECO:0007669"/>
    <property type="project" value="UniProtKB-UniRule"/>
</dbReference>
<dbReference type="HAMAP" id="MF_01384">
    <property type="entry name" value="UreD"/>
    <property type="match status" value="1"/>
</dbReference>
<dbReference type="InterPro" id="IPR002669">
    <property type="entry name" value="UreD"/>
</dbReference>
<dbReference type="PANTHER" id="PTHR33643">
    <property type="entry name" value="UREASE ACCESSORY PROTEIN D"/>
    <property type="match status" value="1"/>
</dbReference>
<dbReference type="PANTHER" id="PTHR33643:SF1">
    <property type="entry name" value="UREASE ACCESSORY PROTEIN D"/>
    <property type="match status" value="1"/>
</dbReference>
<dbReference type="Pfam" id="PF01774">
    <property type="entry name" value="UreD"/>
    <property type="match status" value="1"/>
</dbReference>
<feature type="chain" id="PRO_0000346592" description="Urease accessory protein UreD 2">
    <location>
        <begin position="1"/>
        <end position="283"/>
    </location>
</feature>
<feature type="region of interest" description="Disordered" evidence="2">
    <location>
        <begin position="1"/>
        <end position="30"/>
    </location>
</feature>
<feature type="compositionally biased region" description="Basic and acidic residues" evidence="2">
    <location>
        <begin position="1"/>
        <end position="11"/>
    </location>
</feature>
<feature type="compositionally biased region" description="Polar residues" evidence="2">
    <location>
        <begin position="13"/>
        <end position="23"/>
    </location>
</feature>
<keyword id="KW-0143">Chaperone</keyword>
<keyword id="KW-0963">Cytoplasm</keyword>
<keyword id="KW-0996">Nickel insertion</keyword>
<keyword id="KW-1185">Reference proteome</keyword>
<name>URED2_SACEN</name>
<protein>
    <recommendedName>
        <fullName evidence="1">Urease accessory protein UreD 2</fullName>
    </recommendedName>
</protein>
<evidence type="ECO:0000255" key="1">
    <source>
        <dbReference type="HAMAP-Rule" id="MF_01384"/>
    </source>
</evidence>
<evidence type="ECO:0000256" key="2">
    <source>
        <dbReference type="SAM" id="MobiDB-lite"/>
    </source>
</evidence>
<evidence type="ECO:0000305" key="3"/>
<gene>
    <name evidence="1" type="primary">ureD2</name>
    <name type="ordered locus">SACE_2523</name>
</gene>
<reference key="1">
    <citation type="journal article" date="2007" name="Nat. Biotechnol.">
        <title>Complete genome sequence of the erythromycin-producing bacterium Saccharopolyspora erythraea NRRL23338.</title>
        <authorList>
            <person name="Oliynyk M."/>
            <person name="Samborskyy M."/>
            <person name="Lester J.B."/>
            <person name="Mironenko T."/>
            <person name="Scott N."/>
            <person name="Dickens S."/>
            <person name="Haydock S.F."/>
            <person name="Leadlay P.F."/>
        </authorList>
    </citation>
    <scope>NUCLEOTIDE SEQUENCE [LARGE SCALE GENOMIC DNA]</scope>
    <source>
        <strain>ATCC 11635 / DSM 40517 / JCM 4748 / NBRC 13426 / NCIMB 8594 / NRRL 2338</strain>
    </source>
</reference>
<accession>A4FCP0</accession>